<accession>P81627</accession>
<gene>
    <name type="primary">JHBP</name>
</gene>
<keyword id="KW-0903">Direct protein sequencing</keyword>
<keyword id="KW-1185">Reference proteome</keyword>
<keyword id="KW-0964">Secreted</keyword>
<organism>
    <name type="scientific">Bombyx mori</name>
    <name type="common">Silk moth</name>
    <dbReference type="NCBI Taxonomy" id="7091"/>
    <lineage>
        <taxon>Eukaryota</taxon>
        <taxon>Metazoa</taxon>
        <taxon>Ecdysozoa</taxon>
        <taxon>Arthropoda</taxon>
        <taxon>Hexapoda</taxon>
        <taxon>Insecta</taxon>
        <taxon>Pterygota</taxon>
        <taxon>Neoptera</taxon>
        <taxon>Endopterygota</taxon>
        <taxon>Lepidoptera</taxon>
        <taxon>Glossata</taxon>
        <taxon>Ditrysia</taxon>
        <taxon>Bombycoidea</taxon>
        <taxon>Bombycidae</taxon>
        <taxon>Bombycinae</taxon>
        <taxon>Bombyx</taxon>
    </lineage>
</organism>
<dbReference type="PaxDb" id="7091-BGIBMGA011549-TA"/>
<dbReference type="eggNOG" id="ENOG502TM48">
    <property type="taxonomic scope" value="Eukaryota"/>
</dbReference>
<dbReference type="InParanoid" id="P81627"/>
<dbReference type="Proteomes" id="UP000005204">
    <property type="component" value="Unassembled WGS sequence"/>
</dbReference>
<dbReference type="GO" id="GO:0005576">
    <property type="term" value="C:extracellular region"/>
    <property type="evidence" value="ECO:0007669"/>
    <property type="project" value="UniProtKB-SubCell"/>
</dbReference>
<feature type="chain" id="PRO_0000084280" description="Juvenile hormone-binding protein">
    <location>
        <begin position="1"/>
        <end position="20" status="greater than"/>
    </location>
</feature>
<feature type="non-terminal residue">
    <location>
        <position position="20"/>
    </location>
</feature>
<sequence length="20" mass="2090">DGDALLKPCKLGDMQKLSSA</sequence>
<reference key="1">
    <citation type="journal article" date="1994" name="Tongmul Hakhoe Chi">
        <title>Characterization of high affinity juvenile hormone binding protein in the hemolymph of Bombyx mori L.</title>
        <authorList>
            <person name="Park C.-H."/>
            <person name="Kim H.R."/>
        </authorList>
    </citation>
    <scope>PROTEIN SEQUENCE</scope>
    <source>
        <strain>Backokjam</strain>
        <tissue>Hemolymph</tissue>
    </source>
</reference>
<reference key="2">
    <citation type="submission" date="1998-12" db="UniProtKB">
        <authorList>
            <person name="Park C.-H."/>
        </authorList>
    </citation>
    <scope>IDENTIFICATION OF CYS-9</scope>
</reference>
<name>JHBP_BOMMO</name>
<protein>
    <recommendedName>
        <fullName>Juvenile hormone-binding protein</fullName>
    </recommendedName>
</protein>
<proteinExistence type="evidence at protein level"/>
<comment type="function">
    <text>Prevents juvenile hormone from being hydrolyzed by general esterases by combining with it specifically.</text>
</comment>
<comment type="subcellular location">
    <subcellularLocation>
        <location>Secreted</location>
    </subcellularLocation>
</comment>